<comment type="function">
    <text evidence="1">One of the primary rRNA binding proteins, it binds directly to 16S rRNA where it nucleates assembly of the head domain of the 30S subunit. Is located at the subunit interface close to the decoding center, probably blocks exit of the E-site tRNA.</text>
</comment>
<comment type="subunit">
    <text evidence="1">Part of the 30S ribosomal subunit. Contacts proteins S9 and S11.</text>
</comment>
<comment type="similarity">
    <text evidence="1">Belongs to the universal ribosomal protein uS7 family.</text>
</comment>
<name>RS7_PSEPF</name>
<reference key="1">
    <citation type="journal article" date="2009" name="Genome Biol.">
        <title>Genomic and genetic analyses of diversity and plant interactions of Pseudomonas fluorescens.</title>
        <authorList>
            <person name="Silby M.W."/>
            <person name="Cerdeno-Tarraga A.M."/>
            <person name="Vernikos G.S."/>
            <person name="Giddens S.R."/>
            <person name="Jackson R.W."/>
            <person name="Preston G.M."/>
            <person name="Zhang X.-X."/>
            <person name="Moon C.D."/>
            <person name="Gehrig S.M."/>
            <person name="Godfrey S.A.C."/>
            <person name="Knight C.G."/>
            <person name="Malone J.G."/>
            <person name="Robinson Z."/>
            <person name="Spiers A.J."/>
            <person name="Harris S."/>
            <person name="Challis G.L."/>
            <person name="Yaxley A.M."/>
            <person name="Harris D."/>
            <person name="Seeger K."/>
            <person name="Murphy L."/>
            <person name="Rutter S."/>
            <person name="Squares R."/>
            <person name="Quail M.A."/>
            <person name="Saunders E."/>
            <person name="Mavromatis K."/>
            <person name="Brettin T.S."/>
            <person name="Bentley S.D."/>
            <person name="Hothersall J."/>
            <person name="Stephens E."/>
            <person name="Thomas C.M."/>
            <person name="Parkhill J."/>
            <person name="Levy S.B."/>
            <person name="Rainey P.B."/>
            <person name="Thomson N.R."/>
        </authorList>
    </citation>
    <scope>NUCLEOTIDE SEQUENCE [LARGE SCALE GENOMIC DNA]</scope>
    <source>
        <strain>Pf0-1</strain>
    </source>
</reference>
<keyword id="KW-0687">Ribonucleoprotein</keyword>
<keyword id="KW-0689">Ribosomal protein</keyword>
<keyword id="KW-0694">RNA-binding</keyword>
<keyword id="KW-0699">rRNA-binding</keyword>
<keyword id="KW-0820">tRNA-binding</keyword>
<proteinExistence type="inferred from homology"/>
<organism>
    <name type="scientific">Pseudomonas fluorescens (strain Pf0-1)</name>
    <dbReference type="NCBI Taxonomy" id="205922"/>
    <lineage>
        <taxon>Bacteria</taxon>
        <taxon>Pseudomonadati</taxon>
        <taxon>Pseudomonadota</taxon>
        <taxon>Gammaproteobacteria</taxon>
        <taxon>Pseudomonadales</taxon>
        <taxon>Pseudomonadaceae</taxon>
        <taxon>Pseudomonas</taxon>
    </lineage>
</organism>
<sequence length="157" mass="17577">MPRRRVAAKREILDDPKYGSQILAKFMNHVMESGKKAVAERIVYGALETVAARKTGTDPLELFEKALDAIAPLVEVKSRRVGGATYQVPVEVRPSRRNALAMRWLVDFARKRGEKSMALRLAGELLDAAEGKGAAVKKREDVHRMAEANKAFSHYRF</sequence>
<evidence type="ECO:0000255" key="1">
    <source>
        <dbReference type="HAMAP-Rule" id="MF_00480"/>
    </source>
</evidence>
<evidence type="ECO:0000305" key="2"/>
<gene>
    <name evidence="1" type="primary">rpsG</name>
    <name type="ordered locus">Pfl01_5083</name>
</gene>
<feature type="chain" id="PRO_0000226518" description="Small ribosomal subunit protein uS7">
    <location>
        <begin position="1"/>
        <end position="157"/>
    </location>
</feature>
<dbReference type="EMBL" id="CP000094">
    <property type="protein sequence ID" value="ABA76820.1"/>
    <property type="molecule type" value="Genomic_DNA"/>
</dbReference>
<dbReference type="RefSeq" id="WP_007957592.1">
    <property type="nucleotide sequence ID" value="NC_007492.2"/>
</dbReference>
<dbReference type="SMR" id="Q3K5Y4"/>
<dbReference type="KEGG" id="pfo:Pfl01_5083"/>
<dbReference type="eggNOG" id="COG0049">
    <property type="taxonomic scope" value="Bacteria"/>
</dbReference>
<dbReference type="HOGENOM" id="CLU_072226_1_1_6"/>
<dbReference type="Proteomes" id="UP000002704">
    <property type="component" value="Chromosome"/>
</dbReference>
<dbReference type="GO" id="GO:0015935">
    <property type="term" value="C:small ribosomal subunit"/>
    <property type="evidence" value="ECO:0007669"/>
    <property type="project" value="InterPro"/>
</dbReference>
<dbReference type="GO" id="GO:0019843">
    <property type="term" value="F:rRNA binding"/>
    <property type="evidence" value="ECO:0007669"/>
    <property type="project" value="UniProtKB-UniRule"/>
</dbReference>
<dbReference type="GO" id="GO:0003735">
    <property type="term" value="F:structural constituent of ribosome"/>
    <property type="evidence" value="ECO:0007669"/>
    <property type="project" value="InterPro"/>
</dbReference>
<dbReference type="GO" id="GO:0000049">
    <property type="term" value="F:tRNA binding"/>
    <property type="evidence" value="ECO:0007669"/>
    <property type="project" value="UniProtKB-UniRule"/>
</dbReference>
<dbReference type="GO" id="GO:0006412">
    <property type="term" value="P:translation"/>
    <property type="evidence" value="ECO:0007669"/>
    <property type="project" value="UniProtKB-UniRule"/>
</dbReference>
<dbReference type="CDD" id="cd14869">
    <property type="entry name" value="uS7_Bacteria"/>
    <property type="match status" value="1"/>
</dbReference>
<dbReference type="FunFam" id="1.10.455.10:FF:000001">
    <property type="entry name" value="30S ribosomal protein S7"/>
    <property type="match status" value="1"/>
</dbReference>
<dbReference type="Gene3D" id="1.10.455.10">
    <property type="entry name" value="Ribosomal protein S7 domain"/>
    <property type="match status" value="1"/>
</dbReference>
<dbReference type="HAMAP" id="MF_00480_B">
    <property type="entry name" value="Ribosomal_uS7_B"/>
    <property type="match status" value="1"/>
</dbReference>
<dbReference type="InterPro" id="IPR000235">
    <property type="entry name" value="Ribosomal_uS7"/>
</dbReference>
<dbReference type="InterPro" id="IPR005717">
    <property type="entry name" value="Ribosomal_uS7_bac/org-type"/>
</dbReference>
<dbReference type="InterPro" id="IPR020606">
    <property type="entry name" value="Ribosomal_uS7_CS"/>
</dbReference>
<dbReference type="InterPro" id="IPR023798">
    <property type="entry name" value="Ribosomal_uS7_dom"/>
</dbReference>
<dbReference type="InterPro" id="IPR036823">
    <property type="entry name" value="Ribosomal_uS7_dom_sf"/>
</dbReference>
<dbReference type="NCBIfam" id="TIGR01029">
    <property type="entry name" value="rpsG_bact"/>
    <property type="match status" value="1"/>
</dbReference>
<dbReference type="PANTHER" id="PTHR11205">
    <property type="entry name" value="RIBOSOMAL PROTEIN S7"/>
    <property type="match status" value="1"/>
</dbReference>
<dbReference type="Pfam" id="PF00177">
    <property type="entry name" value="Ribosomal_S7"/>
    <property type="match status" value="1"/>
</dbReference>
<dbReference type="PIRSF" id="PIRSF002122">
    <property type="entry name" value="RPS7p_RPS7a_RPS5e_RPS7o"/>
    <property type="match status" value="1"/>
</dbReference>
<dbReference type="SUPFAM" id="SSF47973">
    <property type="entry name" value="Ribosomal protein S7"/>
    <property type="match status" value="1"/>
</dbReference>
<dbReference type="PROSITE" id="PS00052">
    <property type="entry name" value="RIBOSOMAL_S7"/>
    <property type="match status" value="1"/>
</dbReference>
<protein>
    <recommendedName>
        <fullName evidence="1">Small ribosomal subunit protein uS7</fullName>
    </recommendedName>
    <alternativeName>
        <fullName evidence="2">30S ribosomal protein S7</fullName>
    </alternativeName>
</protein>
<accession>Q3K5Y4</accession>